<proteinExistence type="inferred from homology"/>
<name>RSBW_BACCQ</name>
<organism>
    <name type="scientific">Bacillus cereus (strain Q1)</name>
    <dbReference type="NCBI Taxonomy" id="361100"/>
    <lineage>
        <taxon>Bacteria</taxon>
        <taxon>Bacillati</taxon>
        <taxon>Bacillota</taxon>
        <taxon>Bacilli</taxon>
        <taxon>Bacillales</taxon>
        <taxon>Bacillaceae</taxon>
        <taxon>Bacillus</taxon>
        <taxon>Bacillus cereus group</taxon>
    </lineage>
</organism>
<sequence>MMERFEKIEMKIPAKAEYVAIIRLTMAGVANRMGFAYDDIEDMKIAISEACTNIVQHAYKEDVGEIAIVFGLYEDRLEIMVADNGVSFDFNNLRSKVGPYDISKPVEHLPENGLGLYLINTLMDDIQIMHDEGMTVLMTKYIQREQVENDGNPISTYNSY</sequence>
<comment type="function">
    <text evidence="1">Negative regulator of sigma-B activity. Phosphorylates and inactivates its specific antagonist protein, RsbV. Upon phosphorylation of RsbV, RsbW is released and binds to sigma-B, thereby blocking its ability to form an RNA polymerase holoenzyme (E-sigma-B).</text>
</comment>
<comment type="catalytic activity">
    <reaction evidence="1">
        <text>L-seryl-[protein] + ATP = O-phospho-L-seryl-[protein] + ADP + H(+)</text>
        <dbReference type="Rhea" id="RHEA:17989"/>
        <dbReference type="Rhea" id="RHEA-COMP:9863"/>
        <dbReference type="Rhea" id="RHEA-COMP:11604"/>
        <dbReference type="ChEBI" id="CHEBI:15378"/>
        <dbReference type="ChEBI" id="CHEBI:29999"/>
        <dbReference type="ChEBI" id="CHEBI:30616"/>
        <dbReference type="ChEBI" id="CHEBI:83421"/>
        <dbReference type="ChEBI" id="CHEBI:456216"/>
        <dbReference type="EC" id="2.7.11.1"/>
    </reaction>
</comment>
<comment type="catalytic activity">
    <reaction evidence="1">
        <text>L-threonyl-[protein] + ATP = O-phospho-L-threonyl-[protein] + ADP + H(+)</text>
        <dbReference type="Rhea" id="RHEA:46608"/>
        <dbReference type="Rhea" id="RHEA-COMP:11060"/>
        <dbReference type="Rhea" id="RHEA-COMP:11605"/>
        <dbReference type="ChEBI" id="CHEBI:15378"/>
        <dbReference type="ChEBI" id="CHEBI:30013"/>
        <dbReference type="ChEBI" id="CHEBI:30616"/>
        <dbReference type="ChEBI" id="CHEBI:61977"/>
        <dbReference type="ChEBI" id="CHEBI:456216"/>
        <dbReference type="EC" id="2.7.11.1"/>
    </reaction>
</comment>
<comment type="similarity">
    <text evidence="1">Belongs to the anti-sigma-factor family.</text>
</comment>
<gene>
    <name evidence="1" type="primary">rsbW</name>
    <name type="ordered locus">BCQ_1067</name>
</gene>
<dbReference type="EC" id="2.7.11.1" evidence="1"/>
<dbReference type="EMBL" id="CP000227">
    <property type="protein sequence ID" value="ACM11497.1"/>
    <property type="molecule type" value="Genomic_DNA"/>
</dbReference>
<dbReference type="SMR" id="B9ISD5"/>
<dbReference type="KEGG" id="bcq:BCQ_1067"/>
<dbReference type="HOGENOM" id="CLU_090336_11_1_9"/>
<dbReference type="Proteomes" id="UP000000441">
    <property type="component" value="Chromosome"/>
</dbReference>
<dbReference type="GO" id="GO:0005524">
    <property type="term" value="F:ATP binding"/>
    <property type="evidence" value="ECO:0007669"/>
    <property type="project" value="UniProtKB-KW"/>
</dbReference>
<dbReference type="GO" id="GO:0106310">
    <property type="term" value="F:protein serine kinase activity"/>
    <property type="evidence" value="ECO:0007669"/>
    <property type="project" value="RHEA"/>
</dbReference>
<dbReference type="GO" id="GO:0004674">
    <property type="term" value="F:protein serine/threonine kinase activity"/>
    <property type="evidence" value="ECO:0007669"/>
    <property type="project" value="UniProtKB-KW"/>
</dbReference>
<dbReference type="GO" id="GO:0016989">
    <property type="term" value="F:sigma factor antagonist activity"/>
    <property type="evidence" value="ECO:0007669"/>
    <property type="project" value="InterPro"/>
</dbReference>
<dbReference type="CDD" id="cd16936">
    <property type="entry name" value="HATPase_RsbW-like"/>
    <property type="match status" value="1"/>
</dbReference>
<dbReference type="FunFam" id="3.30.565.10:FF:000026">
    <property type="entry name" value="Serine-protein kinase RsbW"/>
    <property type="match status" value="1"/>
</dbReference>
<dbReference type="Gene3D" id="3.30.565.10">
    <property type="entry name" value="Histidine kinase-like ATPase, C-terminal domain"/>
    <property type="match status" value="1"/>
</dbReference>
<dbReference type="HAMAP" id="MF_00638">
    <property type="entry name" value="Anti_sigma_B"/>
    <property type="match status" value="1"/>
</dbReference>
<dbReference type="InterPro" id="IPR050267">
    <property type="entry name" value="Anti-sigma-factor_SerPK"/>
</dbReference>
<dbReference type="InterPro" id="IPR036890">
    <property type="entry name" value="HATPase_C_sf"/>
</dbReference>
<dbReference type="InterPro" id="IPR010193">
    <property type="entry name" value="RsbW"/>
</dbReference>
<dbReference type="NCBIfam" id="NF003144">
    <property type="entry name" value="PRK04069.1"/>
    <property type="match status" value="1"/>
</dbReference>
<dbReference type="NCBIfam" id="TIGR01924">
    <property type="entry name" value="rsbW_low_gc"/>
    <property type="match status" value="1"/>
</dbReference>
<dbReference type="PANTHER" id="PTHR35526">
    <property type="entry name" value="ANTI-SIGMA-F FACTOR RSBW-RELATED"/>
    <property type="match status" value="1"/>
</dbReference>
<dbReference type="PANTHER" id="PTHR35526:SF9">
    <property type="entry name" value="SERINE-PROTEIN KINASE RSBW"/>
    <property type="match status" value="1"/>
</dbReference>
<dbReference type="Pfam" id="PF13581">
    <property type="entry name" value="HATPase_c_2"/>
    <property type="match status" value="1"/>
</dbReference>
<dbReference type="SUPFAM" id="SSF55874">
    <property type="entry name" value="ATPase domain of HSP90 chaperone/DNA topoisomerase II/histidine kinase"/>
    <property type="match status" value="1"/>
</dbReference>
<protein>
    <recommendedName>
        <fullName evidence="1">Serine-protein kinase RsbW</fullName>
        <ecNumber evidence="1">2.7.11.1</ecNumber>
    </recommendedName>
    <alternativeName>
        <fullName evidence="1">Anti-sigma-B factor</fullName>
    </alternativeName>
    <alternativeName>
        <fullName evidence="1">Sigma-B negative effector RsbW</fullName>
    </alternativeName>
</protein>
<reference key="1">
    <citation type="journal article" date="2009" name="J. Bacteriol.">
        <title>Complete genome sequence of the extremophilic Bacillus cereus strain Q1 with industrial applications.</title>
        <authorList>
            <person name="Xiong Z."/>
            <person name="Jiang Y."/>
            <person name="Qi D."/>
            <person name="Lu H."/>
            <person name="Yang F."/>
            <person name="Yang J."/>
            <person name="Chen L."/>
            <person name="Sun L."/>
            <person name="Xu X."/>
            <person name="Xue Y."/>
            <person name="Zhu Y."/>
            <person name="Jin Q."/>
        </authorList>
    </citation>
    <scope>NUCLEOTIDE SEQUENCE [LARGE SCALE GENOMIC DNA]</scope>
    <source>
        <strain>Q1</strain>
    </source>
</reference>
<evidence type="ECO:0000255" key="1">
    <source>
        <dbReference type="HAMAP-Rule" id="MF_00638"/>
    </source>
</evidence>
<accession>B9ISD5</accession>
<feature type="chain" id="PRO_1000147387" description="Serine-protein kinase RsbW">
    <location>
        <begin position="1"/>
        <end position="160"/>
    </location>
</feature>
<keyword id="KW-0067">ATP-binding</keyword>
<keyword id="KW-0418">Kinase</keyword>
<keyword id="KW-0547">Nucleotide-binding</keyword>
<keyword id="KW-0723">Serine/threonine-protein kinase</keyword>
<keyword id="KW-0808">Transferase</keyword>